<proteinExistence type="inferred from homology"/>
<sequence length="686" mass="75244">MGASQSTSGIEGASSPEQLSVLLAERFATKCFTPLELTHFKDNFYSRALDQAGFRYWNEKILSDFLSVPDGIYTNEKDGGHDGRLDAGPVVFRMVSYLGAFPFQKTLAPSVLTFDSMVKVVVLLTERYGKVLRRGRKDRVKLLFGSLADVGRSLEQDTKKQNDSAESASKSEDSKQSSHVHGFSVDEPTNDDYEEHEDDDDLALAALESLDAIEVFKHDQQIDRAVCEARISIDTFRRLLMLLLAIAPLRPLESVNKYTFNLSSEEQAAVKREADTIIASFTEEEIRDGIGYKTFAKTVTLSLPHLFDPLTPLFEHLLFSENLDLSRKQTGQSEPSPESPPSEAPTDANIDEKPTTIMLPGSFESAILTPSMVSHLSFFLPASSGQNLYRSDIRLHPVFSTVAHGESLTSFQHNVFTWQAPSLLIVQGALPGSSGSPDELITLGAYIPQPWKPSSSSSYESPQNLNNRSRLPYLFQLHPKHSVLPGNSSLLQTKEQPSTTPIVYFSTTTGIAIGCEVPASAQQHRTSYGPGVPSPHQQPHRRQSSTNHKQQQGPLPHGAGSLIIDAALETAQLHISYLAAHTGVFTPAVPPTLPTITHIDIYNLEIWGIIEPPSLSLLPDSAGIAKDAISRQREAWQFDAREAERRKGINVKLGSGNDSNYQNAKALLEMAGIIGDQAQQRSGGSV</sequence>
<accession>B8MJJ8</accession>
<gene>
    <name type="primary">rtc5</name>
    <name type="ORF">TSTA_046520</name>
</gene>
<comment type="function">
    <text evidence="1">May be involved in a process influencing telomere capping.</text>
</comment>
<comment type="subcellular location">
    <subcellularLocation>
        <location evidence="1">Cytoplasm</location>
    </subcellularLocation>
</comment>
<comment type="similarity">
    <text evidence="4">Belongs to the RTC5 family.</text>
</comment>
<keyword id="KW-0963">Cytoplasm</keyword>
<keyword id="KW-1185">Reference proteome</keyword>
<name>RTC5_TALSN</name>
<protein>
    <recommendedName>
        <fullName>Restriction of telomere capping protein 5</fullName>
    </recommendedName>
</protein>
<feature type="chain" id="PRO_0000408846" description="Restriction of telomere capping protein 5">
    <location>
        <begin position="1"/>
        <end position="686"/>
    </location>
</feature>
<feature type="domain" description="TLDc" evidence="2">
    <location>
        <begin position="366"/>
        <end position="610"/>
    </location>
</feature>
<feature type="region of interest" description="Disordered" evidence="3">
    <location>
        <begin position="155"/>
        <end position="198"/>
    </location>
</feature>
<feature type="region of interest" description="Disordered" evidence="3">
    <location>
        <begin position="326"/>
        <end position="355"/>
    </location>
</feature>
<feature type="region of interest" description="Disordered" evidence="3">
    <location>
        <begin position="522"/>
        <end position="559"/>
    </location>
</feature>
<feature type="compositionally biased region" description="Basic and acidic residues" evidence="3">
    <location>
        <begin position="155"/>
        <end position="176"/>
    </location>
</feature>
<feature type="compositionally biased region" description="Acidic residues" evidence="3">
    <location>
        <begin position="188"/>
        <end position="198"/>
    </location>
</feature>
<feature type="compositionally biased region" description="Polar residues" evidence="3">
    <location>
        <begin position="544"/>
        <end position="553"/>
    </location>
</feature>
<evidence type="ECO:0000250" key="1"/>
<evidence type="ECO:0000255" key="2">
    <source>
        <dbReference type="PROSITE-ProRule" id="PRU01234"/>
    </source>
</evidence>
<evidence type="ECO:0000256" key="3">
    <source>
        <dbReference type="SAM" id="MobiDB-lite"/>
    </source>
</evidence>
<evidence type="ECO:0000305" key="4"/>
<dbReference type="EMBL" id="EQ962657">
    <property type="protein sequence ID" value="EED15198.1"/>
    <property type="molecule type" value="Genomic_DNA"/>
</dbReference>
<dbReference type="RefSeq" id="XP_002485151.1">
    <property type="nucleotide sequence ID" value="XM_002485106.1"/>
</dbReference>
<dbReference type="SMR" id="B8MJJ8"/>
<dbReference type="FunCoup" id="B8MJJ8">
    <property type="interactions" value="12"/>
</dbReference>
<dbReference type="STRING" id="441959.B8MJJ8"/>
<dbReference type="GeneID" id="8099563"/>
<dbReference type="VEuPathDB" id="FungiDB:TSTA_046520"/>
<dbReference type="eggNOG" id="ENOG502QV3R">
    <property type="taxonomic scope" value="Eukaryota"/>
</dbReference>
<dbReference type="HOGENOM" id="CLU_011918_1_0_1"/>
<dbReference type="InParanoid" id="B8MJJ8"/>
<dbReference type="OMA" id="KWEFEAR"/>
<dbReference type="OrthoDB" id="289228at2759"/>
<dbReference type="PhylomeDB" id="B8MJJ8"/>
<dbReference type="Proteomes" id="UP000001745">
    <property type="component" value="Unassembled WGS sequence"/>
</dbReference>
<dbReference type="GO" id="GO:0005737">
    <property type="term" value="C:cytoplasm"/>
    <property type="evidence" value="ECO:0007669"/>
    <property type="project" value="UniProtKB-SubCell"/>
</dbReference>
<dbReference type="InterPro" id="IPR006571">
    <property type="entry name" value="TLDc_dom"/>
</dbReference>
<dbReference type="Pfam" id="PF07534">
    <property type="entry name" value="TLD"/>
    <property type="match status" value="1"/>
</dbReference>
<dbReference type="SMART" id="SM00584">
    <property type="entry name" value="TLDc"/>
    <property type="match status" value="1"/>
</dbReference>
<dbReference type="PROSITE" id="PS51886">
    <property type="entry name" value="TLDC"/>
    <property type="match status" value="1"/>
</dbReference>
<organism>
    <name type="scientific">Talaromyces stipitatus (strain ATCC 10500 / CBS 375.48 / QM 6759 / NRRL 1006)</name>
    <name type="common">Penicillium stipitatum</name>
    <dbReference type="NCBI Taxonomy" id="441959"/>
    <lineage>
        <taxon>Eukaryota</taxon>
        <taxon>Fungi</taxon>
        <taxon>Dikarya</taxon>
        <taxon>Ascomycota</taxon>
        <taxon>Pezizomycotina</taxon>
        <taxon>Eurotiomycetes</taxon>
        <taxon>Eurotiomycetidae</taxon>
        <taxon>Eurotiales</taxon>
        <taxon>Trichocomaceae</taxon>
        <taxon>Talaromyces</taxon>
        <taxon>Talaromyces sect. Talaromyces</taxon>
    </lineage>
</organism>
<reference key="1">
    <citation type="journal article" date="2015" name="Genome Announc.">
        <title>Genome sequence of the AIDS-associated pathogen Penicillium marneffei (ATCC18224) and its near taxonomic relative Talaromyces stipitatus (ATCC10500).</title>
        <authorList>
            <person name="Nierman W.C."/>
            <person name="Fedorova-Abrams N.D."/>
            <person name="Andrianopoulos A."/>
        </authorList>
    </citation>
    <scope>NUCLEOTIDE SEQUENCE [LARGE SCALE GENOMIC DNA]</scope>
    <source>
        <strain>ATCC 10500 / CBS 375.48 / QM 6759 / NRRL 1006</strain>
    </source>
</reference>